<comment type="function">
    <text evidence="1">May be involved in pectin and/or xylans biosynthesis in cell walls.</text>
</comment>
<comment type="pathway">
    <text>Glycan metabolism; pectin biosynthesis.</text>
</comment>
<comment type="subcellular location">
    <subcellularLocation>
        <location evidence="1">Golgi apparatus membrane</location>
        <topology evidence="1">Single-pass type II membrane protein</topology>
    </subcellularLocation>
</comment>
<comment type="induction">
    <text evidence="3">By methylviologen (MV), a superoxide radical generating drug.</text>
</comment>
<comment type="similarity">
    <text evidence="4">Belongs to the glycosyltransferase 8 family.</text>
</comment>
<gene>
    <name type="primary">GATL10</name>
    <name type="synonym">GOLS8</name>
    <name type="ordered locus">At3g28340</name>
    <name type="ORF">MZF16.17</name>
</gene>
<evidence type="ECO:0000250" key="1"/>
<evidence type="ECO:0000255" key="2"/>
<evidence type="ECO:0000269" key="3">
    <source>
    </source>
</evidence>
<evidence type="ECO:0000305" key="4"/>
<organism>
    <name type="scientific">Arabidopsis thaliana</name>
    <name type="common">Mouse-ear cress</name>
    <dbReference type="NCBI Taxonomy" id="3702"/>
    <lineage>
        <taxon>Eukaryota</taxon>
        <taxon>Viridiplantae</taxon>
        <taxon>Streptophyta</taxon>
        <taxon>Embryophyta</taxon>
        <taxon>Tracheophyta</taxon>
        <taxon>Spermatophyta</taxon>
        <taxon>Magnoliopsida</taxon>
        <taxon>eudicotyledons</taxon>
        <taxon>Gunneridae</taxon>
        <taxon>Pentapetalae</taxon>
        <taxon>rosids</taxon>
        <taxon>malvids</taxon>
        <taxon>Brassicales</taxon>
        <taxon>Brassicaceae</taxon>
        <taxon>Camelineae</taxon>
        <taxon>Arabidopsis</taxon>
    </lineage>
</organism>
<name>GATLA_ARATH</name>
<feature type="chain" id="PRO_0000392612" description="Probable galacturonosyltransferase-like 10">
    <location>
        <begin position="1"/>
        <end position="365"/>
    </location>
</feature>
<feature type="topological domain" description="Cytoplasmic" evidence="2">
    <location>
        <begin position="1"/>
        <end position="10"/>
    </location>
</feature>
<feature type="transmembrane region" description="Helical; Signal-anchor for type II membrane protein" evidence="2">
    <location>
        <begin position="11"/>
        <end position="31"/>
    </location>
</feature>
<feature type="topological domain" description="Lumenal" evidence="2">
    <location>
        <begin position="32"/>
        <end position="365"/>
    </location>
</feature>
<feature type="glycosylation site" description="N-linked (GlcNAc...) asparagine" evidence="2">
    <location>
        <position position="209"/>
    </location>
</feature>
<dbReference type="EC" id="2.4.1.-"/>
<dbReference type="EMBL" id="AP002051">
    <property type="protein sequence ID" value="BAB02626.1"/>
    <property type="molecule type" value="Genomic_DNA"/>
</dbReference>
<dbReference type="EMBL" id="CP002686">
    <property type="protein sequence ID" value="AEE77435.1"/>
    <property type="molecule type" value="Genomic_DNA"/>
</dbReference>
<dbReference type="EMBL" id="BT011750">
    <property type="protein sequence ID" value="AAS49113.1"/>
    <property type="molecule type" value="mRNA"/>
</dbReference>
<dbReference type="EMBL" id="AK176597">
    <property type="protein sequence ID" value="BAD44360.1"/>
    <property type="molecule type" value="mRNA"/>
</dbReference>
<dbReference type="RefSeq" id="NP_189474.2">
    <property type="nucleotide sequence ID" value="NM_113753.5"/>
</dbReference>
<dbReference type="SMR" id="Q9LHD2"/>
<dbReference type="BioGRID" id="7791">
    <property type="interactions" value="1"/>
</dbReference>
<dbReference type="FunCoup" id="Q9LHD2">
    <property type="interactions" value="570"/>
</dbReference>
<dbReference type="STRING" id="3702.Q9LHD2"/>
<dbReference type="CAZy" id="GT8">
    <property type="family name" value="Glycosyltransferase Family 8"/>
</dbReference>
<dbReference type="GlyCosmos" id="Q9LHD2">
    <property type="glycosylation" value="1 site, No reported glycans"/>
</dbReference>
<dbReference type="GlyGen" id="Q9LHD2">
    <property type="glycosylation" value="1 site"/>
</dbReference>
<dbReference type="iPTMnet" id="Q9LHD2"/>
<dbReference type="PaxDb" id="3702-AT3G28340.1"/>
<dbReference type="ProteomicsDB" id="230450"/>
<dbReference type="EnsemblPlants" id="AT3G28340.1">
    <property type="protein sequence ID" value="AT3G28340.1"/>
    <property type="gene ID" value="AT3G28340"/>
</dbReference>
<dbReference type="GeneID" id="822462"/>
<dbReference type="Gramene" id="AT3G28340.1">
    <property type="protein sequence ID" value="AT3G28340.1"/>
    <property type="gene ID" value="AT3G28340"/>
</dbReference>
<dbReference type="KEGG" id="ath:AT3G28340"/>
<dbReference type="Araport" id="AT3G28340"/>
<dbReference type="TAIR" id="AT3G28340">
    <property type="gene designation" value="GATL10"/>
</dbReference>
<dbReference type="eggNOG" id="ENOG502QTN8">
    <property type="taxonomic scope" value="Eukaryota"/>
</dbReference>
<dbReference type="HOGENOM" id="CLU_034713_0_0_1"/>
<dbReference type="InParanoid" id="Q9LHD2"/>
<dbReference type="OMA" id="YQNGLEC"/>
<dbReference type="PhylomeDB" id="Q9LHD2"/>
<dbReference type="UniPathway" id="UPA00845"/>
<dbReference type="PRO" id="PR:Q9LHD2"/>
<dbReference type="Proteomes" id="UP000006548">
    <property type="component" value="Chromosome 3"/>
</dbReference>
<dbReference type="ExpressionAtlas" id="Q9LHD2">
    <property type="expression patterns" value="baseline and differential"/>
</dbReference>
<dbReference type="GO" id="GO:0000139">
    <property type="term" value="C:Golgi membrane"/>
    <property type="evidence" value="ECO:0007669"/>
    <property type="project" value="UniProtKB-SubCell"/>
</dbReference>
<dbReference type="GO" id="GO:0047262">
    <property type="term" value="F:polygalacturonate 4-alpha-galacturonosyltransferase activity"/>
    <property type="evidence" value="ECO:0000250"/>
    <property type="project" value="TAIR"/>
</dbReference>
<dbReference type="GO" id="GO:0071555">
    <property type="term" value="P:cell wall organization"/>
    <property type="evidence" value="ECO:0007669"/>
    <property type="project" value="UniProtKB-KW"/>
</dbReference>
<dbReference type="GO" id="GO:0045489">
    <property type="term" value="P:pectin biosynthetic process"/>
    <property type="evidence" value="ECO:0007669"/>
    <property type="project" value="UniProtKB-UniPathway"/>
</dbReference>
<dbReference type="GO" id="GO:0006979">
    <property type="term" value="P:response to oxidative stress"/>
    <property type="evidence" value="ECO:0000270"/>
    <property type="project" value="TAIR"/>
</dbReference>
<dbReference type="FunFam" id="3.90.550.10:FF:000024">
    <property type="entry name" value="Hexosyltransferase"/>
    <property type="match status" value="1"/>
</dbReference>
<dbReference type="Gene3D" id="3.90.550.10">
    <property type="entry name" value="Spore Coat Polysaccharide Biosynthesis Protein SpsA, Chain A"/>
    <property type="match status" value="1"/>
</dbReference>
<dbReference type="InterPro" id="IPR002495">
    <property type="entry name" value="Glyco_trans_8"/>
</dbReference>
<dbReference type="InterPro" id="IPR050748">
    <property type="entry name" value="Glycosyltrans_8_dom-fam"/>
</dbReference>
<dbReference type="InterPro" id="IPR029044">
    <property type="entry name" value="Nucleotide-diphossugar_trans"/>
</dbReference>
<dbReference type="PANTHER" id="PTHR13778:SF57">
    <property type="entry name" value="GALACTURONOSYLTRANSFERASE-LIKE 10-RELATED"/>
    <property type="match status" value="1"/>
</dbReference>
<dbReference type="PANTHER" id="PTHR13778">
    <property type="entry name" value="GLYCOSYLTRANSFERASE 8 DOMAIN-CONTAINING PROTEIN"/>
    <property type="match status" value="1"/>
</dbReference>
<dbReference type="Pfam" id="PF01501">
    <property type="entry name" value="Glyco_transf_8"/>
    <property type="match status" value="1"/>
</dbReference>
<dbReference type="SUPFAM" id="SSF53448">
    <property type="entry name" value="Nucleotide-diphospho-sugar transferases"/>
    <property type="match status" value="1"/>
</dbReference>
<sequence>MMSGSRLASRLIIIFSIISTSFFTVESIRLFPDSFDDASSDLMEAPAYQNGLDCSVLAKNRLLLACDPSAVHIAMTLDPAYLRGTVSAVHSILKHTSCPENIFFHFIASGTSQGSLAKTLSSVFPSLSFKVYTFEETTVKNLISSSIRQALDSPLNYARSYLSEILSSCVSRVIYLDSDVIVVDDIQKLWKISLSGSRTIGAPEYCHANFTKYFTDSFWSDQKLSSVFDSKTPCYFNTGVMVIDLERWREGDYTRKIENWMKIQKEDKRIYELGSLPPFLLVFGGDIEAIDHQWNQHGLGGDNIVSSCRSLHPGPVSLIHWSGKGKPWVRLDDGKPCPIDYLWAPYDLHKSQRQYLQYNQELEIL</sequence>
<proteinExistence type="evidence at transcript level"/>
<reference key="1">
    <citation type="journal article" date="2000" name="DNA Res.">
        <title>Structural analysis of Arabidopsis thaliana chromosome 3. II. Sequence features of the 4,251,695 bp regions covered by 90 P1, TAC and BAC clones.</title>
        <authorList>
            <person name="Kaneko T."/>
            <person name="Katoh T."/>
            <person name="Sato S."/>
            <person name="Nakamura Y."/>
            <person name="Asamizu E."/>
            <person name="Tabata S."/>
        </authorList>
    </citation>
    <scope>NUCLEOTIDE SEQUENCE [LARGE SCALE GENOMIC DNA]</scope>
    <source>
        <strain>cv. Columbia</strain>
    </source>
</reference>
<reference key="2">
    <citation type="journal article" date="2017" name="Plant J.">
        <title>Araport11: a complete reannotation of the Arabidopsis thaliana reference genome.</title>
        <authorList>
            <person name="Cheng C.Y."/>
            <person name="Krishnakumar V."/>
            <person name="Chan A.P."/>
            <person name="Thibaud-Nissen F."/>
            <person name="Schobel S."/>
            <person name="Town C.D."/>
        </authorList>
    </citation>
    <scope>GENOME REANNOTATION</scope>
    <source>
        <strain>cv. Columbia</strain>
    </source>
</reference>
<reference key="3">
    <citation type="submission" date="2004-03" db="EMBL/GenBank/DDBJ databases">
        <title>Arabidopsis ORF clones.</title>
        <authorList>
            <person name="Cheuk R."/>
            <person name="Chen H."/>
            <person name="Kim C.J."/>
            <person name="Shinn P."/>
            <person name="Carninci P."/>
            <person name="Hayashizaki Y."/>
            <person name="Ishida J."/>
            <person name="Kamiya A."/>
            <person name="Kawai J."/>
            <person name="Narusaka M."/>
            <person name="Sakurai T."/>
            <person name="Satou M."/>
            <person name="Seki M."/>
            <person name="Shinozaki K."/>
            <person name="Ecker J.R."/>
        </authorList>
    </citation>
    <scope>NUCLEOTIDE SEQUENCE [LARGE SCALE MRNA]</scope>
</reference>
<reference key="4">
    <citation type="submission" date="2004-09" db="EMBL/GenBank/DDBJ databases">
        <title>Large-scale analysis of RIKEN Arabidopsis full-length (RAFL) cDNAs.</title>
        <authorList>
            <person name="Totoki Y."/>
            <person name="Seki M."/>
            <person name="Ishida J."/>
            <person name="Nakajima M."/>
            <person name="Enju A."/>
            <person name="Kamiya A."/>
            <person name="Narusaka M."/>
            <person name="Shin-i T."/>
            <person name="Nakagawa M."/>
            <person name="Sakamoto N."/>
            <person name="Oishi K."/>
            <person name="Kohara Y."/>
            <person name="Kobayashi M."/>
            <person name="Toyoda A."/>
            <person name="Sakaki Y."/>
            <person name="Sakurai T."/>
            <person name="Iida K."/>
            <person name="Akiyama K."/>
            <person name="Satou M."/>
            <person name="Toyoda T."/>
            <person name="Konagaya A."/>
            <person name="Carninci P."/>
            <person name="Kawai J."/>
            <person name="Hayashizaki Y."/>
            <person name="Shinozaki K."/>
        </authorList>
    </citation>
    <scope>NUCLEOTIDE SEQUENCE [LARGE SCALE MRNA]</scope>
    <source>
        <strain>cv. Columbia</strain>
    </source>
</reference>
<reference key="5">
    <citation type="journal article" date="2006" name="Proc. Natl. Acad. Sci. U.S.A.">
        <title>Functional identification of an Arabidopsis pectin biosynthetic homogalacturonan galacturonosyltransferase.</title>
        <authorList>
            <person name="Sterling J.D."/>
            <person name="Atmodjo M.A."/>
            <person name="Inwood S.E."/>
            <person name="Kumar Kolli V.S."/>
            <person name="Quigley H.F."/>
            <person name="Hahn M.G."/>
            <person name="Mohnen D."/>
        </authorList>
    </citation>
    <scope>GENE FAMILY</scope>
    <scope>NOMENCLATURE</scope>
</reference>
<reference key="6">
    <citation type="journal article" date="2008" name="Plant Physiol.">
        <title>Galactinol and raffinose constitute a novel function to protect plants from oxidative damage.</title>
        <authorList>
            <person name="Nishizawa A."/>
            <person name="Yabuta Y."/>
            <person name="Shigeoka S."/>
        </authorList>
    </citation>
    <scope>INDUCTION BY METHYLVIOLOGEN</scope>
    <scope>GENE FAMILY</scope>
    <scope>NOMENCLATURE</scope>
</reference>
<protein>
    <recommendedName>
        <fullName>Probable galacturonosyltransferase-like 10</fullName>
        <ecNumber>2.4.1.-</ecNumber>
    </recommendedName>
    <alternativeName>
        <fullName>Galactinol synthase 8</fullName>
        <shortName>AtGolS8</shortName>
        <shortName>GolS-8</shortName>
    </alternativeName>
</protein>
<accession>Q9LHD2</accession>
<keyword id="KW-0961">Cell wall biogenesis/degradation</keyword>
<keyword id="KW-0325">Glycoprotein</keyword>
<keyword id="KW-0328">Glycosyltransferase</keyword>
<keyword id="KW-0333">Golgi apparatus</keyword>
<keyword id="KW-0472">Membrane</keyword>
<keyword id="KW-1185">Reference proteome</keyword>
<keyword id="KW-0735">Signal-anchor</keyword>
<keyword id="KW-0808">Transferase</keyword>
<keyword id="KW-0812">Transmembrane</keyword>
<keyword id="KW-1133">Transmembrane helix</keyword>